<comment type="function">
    <text evidence="2">Involved in the regulation of actin polymerization.</text>
</comment>
<comment type="subcellular location">
    <subcellularLocation>
        <location evidence="1">Cell membrane</location>
        <topology evidence="1">Peripheral membrane protein</topology>
    </subcellularLocation>
</comment>
<comment type="tissue specificity">
    <text>Found at relatively high levels in testes, at moderate levels in brain, heart and skeletal muscle, at lower levels in lung, skin, kidney and small intestine, and is undetectable in liver or spleen.</text>
</comment>
<comment type="similarity">
    <text evidence="5">Belongs to the CAP family.</text>
</comment>
<reference key="1">
    <citation type="journal article" date="1995" name="Gene">
        <title>Differential expression of CAP and CAP2 in adult rat tissues.</title>
        <authorList>
            <person name="Swiston J."/>
            <person name="Hubberstey A."/>
            <person name="Yu G."/>
            <person name="Young D."/>
        </authorList>
    </citation>
    <scope>NUCLEOTIDE SEQUENCE [MRNA]</scope>
</reference>
<reference key="2">
    <citation type="journal article" date="2012" name="Nat. Commun.">
        <title>Quantitative maps of protein phosphorylation sites across 14 different rat organs and tissues.</title>
        <authorList>
            <person name="Lundby A."/>
            <person name="Secher A."/>
            <person name="Lage K."/>
            <person name="Nordsborg N.B."/>
            <person name="Dmytriyev A."/>
            <person name="Lundby C."/>
            <person name="Olsen J.V."/>
        </authorList>
    </citation>
    <scope>PHOSPHORYLATION [LARGE SCALE ANALYSIS] AT SER-301</scope>
    <scope>IDENTIFICATION BY MASS SPECTROMETRY [LARGE SCALE ANALYSIS]</scope>
</reference>
<sequence length="477" mass="52912">MADMLGLMQRLEFAVSRLERLSSGLHEPPGGCGEVNSLSRGIVAPSVEAFDKLINSMVAEFLKNSRVLAGDVETHAEMVHGAFQAQRAFLLMVSQHQQPQENEVAVLLKPISEKIQEIQTFRERNRGSDMFNHLSAVSESIAALGWIAVSPKPGPYVKEMNDAATFYTNRVLRDYKHSDLRHVDWVRSYLKIWSELQAYIKEHHTTGLTWSKTGPVASTASAFSILSSGPGLPPPPPPPPPPGPPPPFENEGGKEEPSPSRSALFAQLNQGEAITKGLRHVTDDKKIYKNPSLRAQGQIRSPTKTRTPSPTSSKSNSPQKHAPVLELEGKKWRVEYQEDRNDLVISETELKQVAYIFKCDKSTLQIKGKVNSITVDNCKKFGLVFDHVVGIVEVINSKDIQIQVMGRVPTISINKTEGCHLYLSKDALDCEIVSAKSSEMNVLVPQGDDYREFPIPEQFKTIWDGSKLITEPAEIMA</sequence>
<gene>
    <name type="primary">Cap2</name>
</gene>
<name>CAP2_RAT</name>
<protein>
    <recommendedName>
        <fullName>Adenylyl cyclase-associated protein 2</fullName>
        <shortName>CAP 2</shortName>
    </recommendedName>
</protein>
<keyword id="KW-0007">Acetylation</keyword>
<keyword id="KW-1003">Cell membrane</keyword>
<keyword id="KW-0472">Membrane</keyword>
<keyword id="KW-0597">Phosphoprotein</keyword>
<keyword id="KW-1185">Reference proteome</keyword>
<evidence type="ECO:0000250" key="1"/>
<evidence type="ECO:0000250" key="2">
    <source>
        <dbReference type="UniProtKB" id="P40123"/>
    </source>
</evidence>
<evidence type="ECO:0000255" key="3">
    <source>
        <dbReference type="PROSITE-ProRule" id="PRU00659"/>
    </source>
</evidence>
<evidence type="ECO:0000256" key="4">
    <source>
        <dbReference type="SAM" id="MobiDB-lite"/>
    </source>
</evidence>
<evidence type="ECO:0000305" key="5"/>
<evidence type="ECO:0007744" key="6">
    <source>
    </source>
</evidence>
<dbReference type="EMBL" id="U31935">
    <property type="protein sequence ID" value="AAA92298.1"/>
    <property type="molecule type" value="mRNA"/>
</dbReference>
<dbReference type="PIR" id="JC4386">
    <property type="entry name" value="JC4386"/>
</dbReference>
<dbReference type="RefSeq" id="NP_446326.1">
    <property type="nucleotide sequence ID" value="NM_053874.1"/>
</dbReference>
<dbReference type="RefSeq" id="XP_006253815.1">
    <property type="nucleotide sequence ID" value="XM_006253753.5"/>
</dbReference>
<dbReference type="RefSeq" id="XP_006253816.1">
    <property type="nucleotide sequence ID" value="XM_006253754.4"/>
</dbReference>
<dbReference type="RefSeq" id="XP_038951230.1">
    <property type="nucleotide sequence ID" value="XM_039095302.2"/>
</dbReference>
<dbReference type="SMR" id="P52481"/>
<dbReference type="BioGRID" id="250538">
    <property type="interactions" value="2"/>
</dbReference>
<dbReference type="FunCoup" id="P52481">
    <property type="interactions" value="1197"/>
</dbReference>
<dbReference type="IntAct" id="P52481">
    <property type="interactions" value="1"/>
</dbReference>
<dbReference type="MINT" id="P52481"/>
<dbReference type="STRING" id="10116.ENSRNOP00000074020"/>
<dbReference type="GlyGen" id="P52481">
    <property type="glycosylation" value="1 site"/>
</dbReference>
<dbReference type="iPTMnet" id="P52481"/>
<dbReference type="PhosphoSitePlus" id="P52481"/>
<dbReference type="PaxDb" id="10116-ENSRNOP00000062591"/>
<dbReference type="Ensembl" id="ENSRNOT00000065742.3">
    <property type="protein sequence ID" value="ENSRNOP00000062591.2"/>
    <property type="gene ID" value="ENSRNOG00000043350.4"/>
</dbReference>
<dbReference type="GeneID" id="116653"/>
<dbReference type="KEGG" id="rno:116653"/>
<dbReference type="AGR" id="RGD:620310"/>
<dbReference type="CTD" id="10486"/>
<dbReference type="RGD" id="620310">
    <property type="gene designation" value="Cap2"/>
</dbReference>
<dbReference type="eggNOG" id="KOG2675">
    <property type="taxonomic scope" value="Eukaryota"/>
</dbReference>
<dbReference type="GeneTree" id="ENSGT00390000017955"/>
<dbReference type="InParanoid" id="P52481"/>
<dbReference type="OMA" id="PISDHIH"/>
<dbReference type="OrthoDB" id="1601at2759"/>
<dbReference type="PhylomeDB" id="P52481"/>
<dbReference type="PRO" id="PR:P52481"/>
<dbReference type="Proteomes" id="UP000002494">
    <property type="component" value="Chromosome 17"/>
</dbReference>
<dbReference type="Bgee" id="ENSRNOG00000043350">
    <property type="expression patterns" value="Expressed in frontal cortex and 18 other cell types or tissues"/>
</dbReference>
<dbReference type="GO" id="GO:0005737">
    <property type="term" value="C:cytoplasm"/>
    <property type="evidence" value="ECO:0000318"/>
    <property type="project" value="GO_Central"/>
</dbReference>
<dbReference type="GO" id="GO:0098978">
    <property type="term" value="C:glutamatergic synapse"/>
    <property type="evidence" value="ECO:0000314"/>
    <property type="project" value="SynGO"/>
</dbReference>
<dbReference type="GO" id="GO:0005886">
    <property type="term" value="C:plasma membrane"/>
    <property type="evidence" value="ECO:0007669"/>
    <property type="project" value="UniProtKB-SubCell"/>
</dbReference>
<dbReference type="GO" id="GO:0098794">
    <property type="term" value="C:postsynapse"/>
    <property type="evidence" value="ECO:0000314"/>
    <property type="project" value="SynGO"/>
</dbReference>
<dbReference type="GO" id="GO:0014069">
    <property type="term" value="C:postsynaptic density"/>
    <property type="evidence" value="ECO:0000266"/>
    <property type="project" value="RGD"/>
</dbReference>
<dbReference type="GO" id="GO:0003779">
    <property type="term" value="F:actin binding"/>
    <property type="evidence" value="ECO:0000318"/>
    <property type="project" value="GO_Central"/>
</dbReference>
<dbReference type="GO" id="GO:0008179">
    <property type="term" value="F:adenylate cyclase binding"/>
    <property type="evidence" value="ECO:0000318"/>
    <property type="project" value="GO_Central"/>
</dbReference>
<dbReference type="GO" id="GO:0042802">
    <property type="term" value="F:identical protein binding"/>
    <property type="evidence" value="ECO:0000266"/>
    <property type="project" value="RGD"/>
</dbReference>
<dbReference type="GO" id="GO:0030036">
    <property type="term" value="P:actin cytoskeleton organization"/>
    <property type="evidence" value="ECO:0000304"/>
    <property type="project" value="RGD"/>
</dbReference>
<dbReference type="GO" id="GO:0007015">
    <property type="term" value="P:actin filament organization"/>
    <property type="evidence" value="ECO:0000318"/>
    <property type="project" value="GO_Central"/>
</dbReference>
<dbReference type="GO" id="GO:0019933">
    <property type="term" value="P:cAMP-mediated signaling"/>
    <property type="evidence" value="ECO:0000318"/>
    <property type="project" value="GO_Central"/>
</dbReference>
<dbReference type="GO" id="GO:0000902">
    <property type="term" value="P:cell morphogenesis"/>
    <property type="evidence" value="ECO:0000318"/>
    <property type="project" value="GO_Central"/>
</dbReference>
<dbReference type="GO" id="GO:0007010">
    <property type="term" value="P:cytoskeleton organization"/>
    <property type="evidence" value="ECO:0000304"/>
    <property type="project" value="RGD"/>
</dbReference>
<dbReference type="GO" id="GO:0099140">
    <property type="term" value="P:presynaptic actin cytoskeleton organization"/>
    <property type="evidence" value="ECO:0000266"/>
    <property type="project" value="RGD"/>
</dbReference>
<dbReference type="GO" id="GO:1905274">
    <property type="term" value="P:regulation of modification of postsynaptic actin cytoskeleton"/>
    <property type="evidence" value="ECO:0000314"/>
    <property type="project" value="SynGO"/>
</dbReference>
<dbReference type="FunFam" id="1.25.40.330:FF:000001">
    <property type="entry name" value="Adenylyl cyclase-associated protein"/>
    <property type="match status" value="1"/>
</dbReference>
<dbReference type="FunFam" id="2.160.20.70:FF:000001">
    <property type="entry name" value="Adenylyl cyclase-associated protein"/>
    <property type="match status" value="1"/>
</dbReference>
<dbReference type="Gene3D" id="2.160.20.70">
    <property type="match status" value="1"/>
</dbReference>
<dbReference type="Gene3D" id="1.25.40.330">
    <property type="entry name" value="Adenylate cyclase-associated CAP, N-terminal domain"/>
    <property type="match status" value="1"/>
</dbReference>
<dbReference type="InterPro" id="IPR001837">
    <property type="entry name" value="Adenylate_cyclase-assoc_CAP"/>
</dbReference>
<dbReference type="InterPro" id="IPR013912">
    <property type="entry name" value="Adenylate_cyclase-assoc_CAP_C"/>
</dbReference>
<dbReference type="InterPro" id="IPR017901">
    <property type="entry name" value="C-CAP_CF_C-like"/>
</dbReference>
<dbReference type="InterPro" id="IPR016098">
    <property type="entry name" value="CAP/MinC_C"/>
</dbReference>
<dbReference type="InterPro" id="IPR036223">
    <property type="entry name" value="CAP_C_sf"/>
</dbReference>
<dbReference type="InterPro" id="IPR028417">
    <property type="entry name" value="CAP_CS_C"/>
</dbReference>
<dbReference type="InterPro" id="IPR018106">
    <property type="entry name" value="CAP_CS_N"/>
</dbReference>
<dbReference type="InterPro" id="IPR053950">
    <property type="entry name" value="CAP_N"/>
</dbReference>
<dbReference type="InterPro" id="IPR036222">
    <property type="entry name" value="CAP_N_sf"/>
</dbReference>
<dbReference type="InterPro" id="IPR006599">
    <property type="entry name" value="CARP_motif"/>
</dbReference>
<dbReference type="PANTHER" id="PTHR10652">
    <property type="entry name" value="ADENYLYL CYCLASE-ASSOCIATED PROTEIN"/>
    <property type="match status" value="1"/>
</dbReference>
<dbReference type="PANTHER" id="PTHR10652:SF2">
    <property type="entry name" value="ADENYLYL CYCLASE-ASSOCIATED PROTEIN 2"/>
    <property type="match status" value="1"/>
</dbReference>
<dbReference type="Pfam" id="PF08603">
    <property type="entry name" value="CAP_C"/>
    <property type="match status" value="1"/>
</dbReference>
<dbReference type="Pfam" id="PF21938">
    <property type="entry name" value="CAP_N"/>
    <property type="match status" value="1"/>
</dbReference>
<dbReference type="SMART" id="SM00673">
    <property type="entry name" value="CARP"/>
    <property type="match status" value="2"/>
</dbReference>
<dbReference type="SUPFAM" id="SSF69340">
    <property type="entry name" value="C-terminal domain of adenylylcyclase associated protein"/>
    <property type="match status" value="1"/>
</dbReference>
<dbReference type="SUPFAM" id="SSF101278">
    <property type="entry name" value="N-terminal domain of adenylylcyclase associated protein, CAP"/>
    <property type="match status" value="1"/>
</dbReference>
<dbReference type="PROSITE" id="PS51329">
    <property type="entry name" value="C_CAP_COFACTOR_C"/>
    <property type="match status" value="1"/>
</dbReference>
<dbReference type="PROSITE" id="PS01088">
    <property type="entry name" value="CAP_1"/>
    <property type="match status" value="1"/>
</dbReference>
<dbReference type="PROSITE" id="PS01089">
    <property type="entry name" value="CAP_2"/>
    <property type="match status" value="1"/>
</dbReference>
<organism>
    <name type="scientific">Rattus norvegicus</name>
    <name type="common">Rat</name>
    <dbReference type="NCBI Taxonomy" id="10116"/>
    <lineage>
        <taxon>Eukaryota</taxon>
        <taxon>Metazoa</taxon>
        <taxon>Chordata</taxon>
        <taxon>Craniata</taxon>
        <taxon>Vertebrata</taxon>
        <taxon>Euteleostomi</taxon>
        <taxon>Mammalia</taxon>
        <taxon>Eutheria</taxon>
        <taxon>Euarchontoglires</taxon>
        <taxon>Glires</taxon>
        <taxon>Rodentia</taxon>
        <taxon>Myomorpha</taxon>
        <taxon>Muroidea</taxon>
        <taxon>Muridae</taxon>
        <taxon>Murinae</taxon>
        <taxon>Rattus</taxon>
    </lineage>
</organism>
<proteinExistence type="evidence at protein level"/>
<accession>P52481</accession>
<feature type="initiator methionine" description="Removed" evidence="2">
    <location>
        <position position="1"/>
    </location>
</feature>
<feature type="chain" id="PRO_0000205702" description="Adenylyl cyclase-associated protein 2">
    <location>
        <begin position="2"/>
        <end position="477"/>
    </location>
</feature>
<feature type="domain" description="C-CAP/cofactor C-like" evidence="3">
    <location>
        <begin position="318"/>
        <end position="455"/>
    </location>
</feature>
<feature type="region of interest" description="Disordered" evidence="4">
    <location>
        <begin position="224"/>
        <end position="262"/>
    </location>
</feature>
<feature type="region of interest" description="Disordered" evidence="4">
    <location>
        <begin position="274"/>
        <end position="324"/>
    </location>
</feature>
<feature type="compositionally biased region" description="Pro residues" evidence="4">
    <location>
        <begin position="231"/>
        <end position="248"/>
    </location>
</feature>
<feature type="compositionally biased region" description="Low complexity" evidence="4">
    <location>
        <begin position="300"/>
        <end position="318"/>
    </location>
</feature>
<feature type="modified residue" description="N-acetylalanine" evidence="2">
    <location>
        <position position="2"/>
    </location>
</feature>
<feature type="modified residue" description="Phosphoserine" evidence="6">
    <location>
        <position position="301"/>
    </location>
</feature>
<feature type="modified residue" description="Phosphoserine" evidence="2">
    <location>
        <position position="309"/>
    </location>
</feature>